<keyword id="KW-0378">Hydrolase</keyword>
<keyword id="KW-0479">Metal-binding</keyword>
<keyword id="KW-0862">Zinc</keyword>
<evidence type="ECO:0000255" key="1">
    <source>
        <dbReference type="HAMAP-Rule" id="MF_01374"/>
    </source>
</evidence>
<reference key="1">
    <citation type="journal article" date="1984" name="J. Mol. Biol.">
        <title>Rhodopseudomonas blastica atp operon. Nucleotide sequence and transcription.</title>
        <authorList>
            <person name="Tybulewicz V.L.J."/>
            <person name="Falk G."/>
            <person name="Walker J.E."/>
        </authorList>
    </citation>
    <scope>NUCLEOTIDE SEQUENCE [GENOMIC DNA]</scope>
</reference>
<comment type="function">
    <text evidence="1">Thiolesterase that catalyzes the hydrolysis of S-D-lactoyl-glutathione to form glutathione and D-lactic acid.</text>
</comment>
<comment type="catalytic activity">
    <reaction evidence="1">
        <text>an S-(2-hydroxyacyl)glutathione + H2O = a 2-hydroxy carboxylate + glutathione + H(+)</text>
        <dbReference type="Rhea" id="RHEA:21864"/>
        <dbReference type="ChEBI" id="CHEBI:15377"/>
        <dbReference type="ChEBI" id="CHEBI:15378"/>
        <dbReference type="ChEBI" id="CHEBI:57925"/>
        <dbReference type="ChEBI" id="CHEBI:58896"/>
        <dbReference type="ChEBI" id="CHEBI:71261"/>
        <dbReference type="EC" id="3.1.2.6"/>
    </reaction>
</comment>
<comment type="cofactor">
    <cofactor evidence="1">
        <name>Zn(2+)</name>
        <dbReference type="ChEBI" id="CHEBI:29105"/>
    </cofactor>
    <text evidence="1">Binds 2 Zn(2+) ions per subunit.</text>
</comment>
<comment type="pathway">
    <text evidence="1">Secondary metabolite metabolism; methylglyoxal degradation; (R)-lactate from methylglyoxal: step 2/2.</text>
</comment>
<comment type="subunit">
    <text evidence="1">Monomer.</text>
</comment>
<comment type="similarity">
    <text evidence="1">Belongs to the metallo-beta-lactamase superfamily. Glyoxalase II family.</text>
</comment>
<gene>
    <name evidence="1" type="primary">gloB</name>
</gene>
<sequence>MALNLLTVPCLKDNFAFLLHDAASGRTALVDAPEAAPVLSALAAQGWRLTDILLTHHHDDHIQAVPEIHAATGARVHGAAADAHRLPPLDHALREGDRVAIGAESAVVIDVPGHTRGHIAFHFPGSALAFTGDSLMAAGCGRLFEGTPAEMWASLSKLAALPPETLICSGHDYLDGNLRFALALEPGNPALISRQGRLSEMRREGRLPMPWTLAEELATNPFLRAPLPQMKAAVGLPQASDTVVFAEIRARKDLF</sequence>
<accession>P05446</accession>
<proteinExistence type="inferred from homology"/>
<feature type="chain" id="PRO_0000192354" description="Hydroxyacylglutathione hydrolase">
    <location>
        <begin position="1"/>
        <end position="255"/>
    </location>
</feature>
<feature type="binding site" evidence="1">
    <location>
        <position position="56"/>
    </location>
    <ligand>
        <name>Zn(2+)</name>
        <dbReference type="ChEBI" id="CHEBI:29105"/>
        <label>1</label>
    </ligand>
</feature>
<feature type="binding site" evidence="1">
    <location>
        <position position="58"/>
    </location>
    <ligand>
        <name>Zn(2+)</name>
        <dbReference type="ChEBI" id="CHEBI:29105"/>
        <label>1</label>
    </ligand>
</feature>
<feature type="binding site" evidence="1">
    <location>
        <position position="60"/>
    </location>
    <ligand>
        <name>Zn(2+)</name>
        <dbReference type="ChEBI" id="CHEBI:29105"/>
        <label>2</label>
    </ligand>
</feature>
<feature type="binding site" evidence="1">
    <location>
        <position position="61"/>
    </location>
    <ligand>
        <name>Zn(2+)</name>
        <dbReference type="ChEBI" id="CHEBI:29105"/>
        <label>2</label>
    </ligand>
</feature>
<feature type="binding site" evidence="1">
    <location>
        <position position="114"/>
    </location>
    <ligand>
        <name>Zn(2+)</name>
        <dbReference type="ChEBI" id="CHEBI:29105"/>
        <label>1</label>
    </ligand>
</feature>
<feature type="binding site" evidence="1">
    <location>
        <position position="133"/>
    </location>
    <ligand>
        <name>Zn(2+)</name>
        <dbReference type="ChEBI" id="CHEBI:29105"/>
        <label>1</label>
    </ligand>
</feature>
<feature type="binding site" evidence="1">
    <location>
        <position position="133"/>
    </location>
    <ligand>
        <name>Zn(2+)</name>
        <dbReference type="ChEBI" id="CHEBI:29105"/>
        <label>2</label>
    </ligand>
</feature>
<feature type="binding site" evidence="1">
    <location>
        <position position="171"/>
    </location>
    <ligand>
        <name>Zn(2+)</name>
        <dbReference type="ChEBI" id="CHEBI:29105"/>
        <label>2</label>
    </ligand>
</feature>
<organism>
    <name type="scientific">Fuscovulum blasticum</name>
    <name type="common">Rhodobacter blasticus</name>
    <name type="synonym">Rhodopseudomonas blastica</name>
    <dbReference type="NCBI Taxonomy" id="1075"/>
    <lineage>
        <taxon>Bacteria</taxon>
        <taxon>Pseudomonadati</taxon>
        <taxon>Pseudomonadota</taxon>
        <taxon>Alphaproteobacteria</taxon>
        <taxon>Rhodobacterales</taxon>
        <taxon>Paracoccaceae</taxon>
        <taxon>Pseudogemmobacter</taxon>
    </lineage>
</organism>
<protein>
    <recommendedName>
        <fullName evidence="1">Hydroxyacylglutathione hydrolase</fullName>
        <ecNumber evidence="1">3.1.2.6</ecNumber>
    </recommendedName>
    <alternativeName>
        <fullName evidence="1">Glyoxalase II</fullName>
        <shortName evidence="1">Glx II</shortName>
    </alternativeName>
</protein>
<name>GLO2_FUSBL</name>
<dbReference type="EC" id="3.1.2.6" evidence="1"/>
<dbReference type="EMBL" id="Z00018">
    <property type="protein sequence ID" value="CAA77309.1"/>
    <property type="molecule type" value="Genomic_DNA"/>
</dbReference>
<dbReference type="PIR" id="S04668">
    <property type="entry name" value="S04668"/>
</dbReference>
<dbReference type="SMR" id="P05446"/>
<dbReference type="UniPathway" id="UPA00619">
    <property type="reaction ID" value="UER00676"/>
</dbReference>
<dbReference type="GO" id="GO:0004416">
    <property type="term" value="F:hydroxyacylglutathione hydrolase activity"/>
    <property type="evidence" value="ECO:0007669"/>
    <property type="project" value="UniProtKB-UniRule"/>
</dbReference>
<dbReference type="GO" id="GO:0046872">
    <property type="term" value="F:metal ion binding"/>
    <property type="evidence" value="ECO:0007669"/>
    <property type="project" value="UniProtKB-KW"/>
</dbReference>
<dbReference type="GO" id="GO:0019243">
    <property type="term" value="P:methylglyoxal catabolic process to D-lactate via S-lactoyl-glutathione"/>
    <property type="evidence" value="ECO:0007669"/>
    <property type="project" value="InterPro"/>
</dbReference>
<dbReference type="CDD" id="cd07723">
    <property type="entry name" value="hydroxyacylglutathione_hydrolase_MBL-fold"/>
    <property type="match status" value="1"/>
</dbReference>
<dbReference type="Gene3D" id="3.60.15.10">
    <property type="entry name" value="Ribonuclease Z/Hydroxyacylglutathione hydrolase-like"/>
    <property type="match status" value="1"/>
</dbReference>
<dbReference type="HAMAP" id="MF_01374">
    <property type="entry name" value="Glyoxalase_2"/>
    <property type="match status" value="1"/>
</dbReference>
<dbReference type="InterPro" id="IPR035680">
    <property type="entry name" value="Clx_II_MBL"/>
</dbReference>
<dbReference type="InterPro" id="IPR050110">
    <property type="entry name" value="Glyoxalase_II_hydrolase"/>
</dbReference>
<dbReference type="InterPro" id="IPR032282">
    <property type="entry name" value="HAGH_C"/>
</dbReference>
<dbReference type="InterPro" id="IPR017782">
    <property type="entry name" value="Hydroxyacylglutathione_Hdrlase"/>
</dbReference>
<dbReference type="InterPro" id="IPR001279">
    <property type="entry name" value="Metallo-B-lactamas"/>
</dbReference>
<dbReference type="InterPro" id="IPR036866">
    <property type="entry name" value="RibonucZ/Hydroxyglut_hydro"/>
</dbReference>
<dbReference type="NCBIfam" id="TIGR03413">
    <property type="entry name" value="GSH_gloB"/>
    <property type="match status" value="1"/>
</dbReference>
<dbReference type="PANTHER" id="PTHR43705">
    <property type="entry name" value="HYDROXYACYLGLUTATHIONE HYDROLASE"/>
    <property type="match status" value="1"/>
</dbReference>
<dbReference type="PANTHER" id="PTHR43705:SF1">
    <property type="entry name" value="HYDROXYACYLGLUTATHIONE HYDROLASE GLOB"/>
    <property type="match status" value="1"/>
</dbReference>
<dbReference type="Pfam" id="PF16123">
    <property type="entry name" value="HAGH_C"/>
    <property type="match status" value="1"/>
</dbReference>
<dbReference type="Pfam" id="PF00753">
    <property type="entry name" value="Lactamase_B"/>
    <property type="match status" value="1"/>
</dbReference>
<dbReference type="PIRSF" id="PIRSF005457">
    <property type="entry name" value="Glx"/>
    <property type="match status" value="1"/>
</dbReference>
<dbReference type="SMART" id="SM00849">
    <property type="entry name" value="Lactamase_B"/>
    <property type="match status" value="1"/>
</dbReference>
<dbReference type="SUPFAM" id="SSF56281">
    <property type="entry name" value="Metallo-hydrolase/oxidoreductase"/>
    <property type="match status" value="1"/>
</dbReference>